<keyword id="KW-0678">Repressor</keyword>
<keyword id="KW-0687">Ribonucleoprotein</keyword>
<keyword id="KW-0689">Ribosomal protein</keyword>
<keyword id="KW-0694">RNA-binding</keyword>
<keyword id="KW-0699">rRNA-binding</keyword>
<keyword id="KW-0810">Translation regulation</keyword>
<keyword id="KW-0820">tRNA-binding</keyword>
<evidence type="ECO:0000255" key="1">
    <source>
        <dbReference type="HAMAP-Rule" id="MF_01318"/>
    </source>
</evidence>
<evidence type="ECO:0000305" key="2"/>
<reference key="1">
    <citation type="journal article" date="2010" name="Genome Biol. Evol.">
        <title>Continuing evolution of Burkholderia mallei through genome reduction and large-scale rearrangements.</title>
        <authorList>
            <person name="Losada L."/>
            <person name="Ronning C.M."/>
            <person name="DeShazer D."/>
            <person name="Woods D."/>
            <person name="Fedorova N."/>
            <person name="Kim H.S."/>
            <person name="Shabalina S.A."/>
            <person name="Pearson T.R."/>
            <person name="Brinkac L."/>
            <person name="Tan P."/>
            <person name="Nandi T."/>
            <person name="Crabtree J."/>
            <person name="Badger J."/>
            <person name="Beckstrom-Sternberg S."/>
            <person name="Saqib M."/>
            <person name="Schutzer S.E."/>
            <person name="Keim P."/>
            <person name="Nierman W.C."/>
        </authorList>
    </citation>
    <scope>NUCLEOTIDE SEQUENCE [LARGE SCALE GENOMIC DNA]</scope>
    <source>
        <strain>1710b</strain>
    </source>
</reference>
<name>RL1_BURP1</name>
<sequence>MAKISKRRQAFAAKVDRQKLYPIDDALALVKECASAKFDESIDVAVQLGIDAKKSDQVVRGSVVLPAGTGKSVRVAVFAQGEKAEQARAAGAEVVGMEDLAEQIKAGQMDFDIVIASPDTMRIVGTLGQILGPRGLMPNPKVGTVTPDVATAVKNAKAGQVQFRVDKAGIIHATIGRASFEPTALRTNLSALIEALQKAKPATSKGVYLRKIALSSTMGVGVRVDQGSLAAQ</sequence>
<protein>
    <recommendedName>
        <fullName evidence="1">Large ribosomal subunit protein uL1</fullName>
    </recommendedName>
    <alternativeName>
        <fullName evidence="2">50S ribosomal protein L1</fullName>
    </alternativeName>
</protein>
<organism>
    <name type="scientific">Burkholderia pseudomallei (strain 1710b)</name>
    <dbReference type="NCBI Taxonomy" id="320372"/>
    <lineage>
        <taxon>Bacteria</taxon>
        <taxon>Pseudomonadati</taxon>
        <taxon>Pseudomonadota</taxon>
        <taxon>Betaproteobacteria</taxon>
        <taxon>Burkholderiales</taxon>
        <taxon>Burkholderiaceae</taxon>
        <taxon>Burkholderia</taxon>
        <taxon>pseudomallei group</taxon>
    </lineage>
</organism>
<accession>Q3JMQ0</accession>
<comment type="function">
    <text evidence="1">Binds directly to 23S rRNA. The L1 stalk is quite mobile in the ribosome, and is involved in E site tRNA release.</text>
</comment>
<comment type="function">
    <text evidence="1">Protein L1 is also a translational repressor protein, it controls the translation of the L11 operon by binding to its mRNA.</text>
</comment>
<comment type="subunit">
    <text evidence="1">Part of the 50S ribosomal subunit.</text>
</comment>
<comment type="similarity">
    <text evidence="1">Belongs to the universal ribosomal protein uL1 family.</text>
</comment>
<dbReference type="EMBL" id="CP000124">
    <property type="protein sequence ID" value="ABA50521.1"/>
    <property type="molecule type" value="Genomic_DNA"/>
</dbReference>
<dbReference type="RefSeq" id="WP_004185135.1">
    <property type="nucleotide sequence ID" value="NC_007434.1"/>
</dbReference>
<dbReference type="SMR" id="Q3JMQ0"/>
<dbReference type="EnsemblBacteria" id="ABA50521">
    <property type="protein sequence ID" value="ABA50521"/>
    <property type="gene ID" value="BURPS1710b_3789"/>
</dbReference>
<dbReference type="GeneID" id="93061844"/>
<dbReference type="KEGG" id="bpm:BURPS1710b_3789"/>
<dbReference type="HOGENOM" id="CLU_062853_0_0_4"/>
<dbReference type="Proteomes" id="UP000002700">
    <property type="component" value="Chromosome I"/>
</dbReference>
<dbReference type="GO" id="GO:0022625">
    <property type="term" value="C:cytosolic large ribosomal subunit"/>
    <property type="evidence" value="ECO:0007669"/>
    <property type="project" value="TreeGrafter"/>
</dbReference>
<dbReference type="GO" id="GO:0019843">
    <property type="term" value="F:rRNA binding"/>
    <property type="evidence" value="ECO:0007669"/>
    <property type="project" value="UniProtKB-UniRule"/>
</dbReference>
<dbReference type="GO" id="GO:0003735">
    <property type="term" value="F:structural constituent of ribosome"/>
    <property type="evidence" value="ECO:0007669"/>
    <property type="project" value="InterPro"/>
</dbReference>
<dbReference type="GO" id="GO:0000049">
    <property type="term" value="F:tRNA binding"/>
    <property type="evidence" value="ECO:0007669"/>
    <property type="project" value="UniProtKB-KW"/>
</dbReference>
<dbReference type="GO" id="GO:0006417">
    <property type="term" value="P:regulation of translation"/>
    <property type="evidence" value="ECO:0007669"/>
    <property type="project" value="UniProtKB-KW"/>
</dbReference>
<dbReference type="GO" id="GO:0006412">
    <property type="term" value="P:translation"/>
    <property type="evidence" value="ECO:0007669"/>
    <property type="project" value="UniProtKB-UniRule"/>
</dbReference>
<dbReference type="CDD" id="cd00403">
    <property type="entry name" value="Ribosomal_L1"/>
    <property type="match status" value="1"/>
</dbReference>
<dbReference type="FunFam" id="3.40.50.790:FF:000001">
    <property type="entry name" value="50S ribosomal protein L1"/>
    <property type="match status" value="1"/>
</dbReference>
<dbReference type="Gene3D" id="3.30.190.20">
    <property type="match status" value="1"/>
</dbReference>
<dbReference type="Gene3D" id="3.40.50.790">
    <property type="match status" value="1"/>
</dbReference>
<dbReference type="HAMAP" id="MF_01318_B">
    <property type="entry name" value="Ribosomal_uL1_B"/>
    <property type="match status" value="1"/>
</dbReference>
<dbReference type="InterPro" id="IPR005878">
    <property type="entry name" value="Ribosom_uL1_bac-type"/>
</dbReference>
<dbReference type="InterPro" id="IPR002143">
    <property type="entry name" value="Ribosomal_uL1"/>
</dbReference>
<dbReference type="InterPro" id="IPR023674">
    <property type="entry name" value="Ribosomal_uL1-like"/>
</dbReference>
<dbReference type="InterPro" id="IPR028364">
    <property type="entry name" value="Ribosomal_uL1/biogenesis"/>
</dbReference>
<dbReference type="InterPro" id="IPR016095">
    <property type="entry name" value="Ribosomal_uL1_3-a/b-sand"/>
</dbReference>
<dbReference type="InterPro" id="IPR023673">
    <property type="entry name" value="Ribosomal_uL1_CS"/>
</dbReference>
<dbReference type="NCBIfam" id="TIGR01169">
    <property type="entry name" value="rplA_bact"/>
    <property type="match status" value="1"/>
</dbReference>
<dbReference type="PANTHER" id="PTHR36427">
    <property type="entry name" value="54S RIBOSOMAL PROTEIN L1, MITOCHONDRIAL"/>
    <property type="match status" value="1"/>
</dbReference>
<dbReference type="PANTHER" id="PTHR36427:SF3">
    <property type="entry name" value="LARGE RIBOSOMAL SUBUNIT PROTEIN UL1M"/>
    <property type="match status" value="1"/>
</dbReference>
<dbReference type="Pfam" id="PF00687">
    <property type="entry name" value="Ribosomal_L1"/>
    <property type="match status" value="1"/>
</dbReference>
<dbReference type="PIRSF" id="PIRSF002155">
    <property type="entry name" value="Ribosomal_L1"/>
    <property type="match status" value="1"/>
</dbReference>
<dbReference type="SUPFAM" id="SSF56808">
    <property type="entry name" value="Ribosomal protein L1"/>
    <property type="match status" value="1"/>
</dbReference>
<dbReference type="PROSITE" id="PS01199">
    <property type="entry name" value="RIBOSOMAL_L1"/>
    <property type="match status" value="1"/>
</dbReference>
<gene>
    <name evidence="1" type="primary">rplA</name>
    <name type="ordered locus">BURPS1710b_3789</name>
</gene>
<feature type="chain" id="PRO_0000230595" description="Large ribosomal subunit protein uL1">
    <location>
        <begin position="1"/>
        <end position="232"/>
    </location>
</feature>
<proteinExistence type="inferred from homology"/>